<proteinExistence type="inferred from homology"/>
<gene>
    <name type="primary">matK</name>
    <name type="synonym">ycf14</name>
</gene>
<evidence type="ECO:0000250" key="1"/>
<evidence type="ECO:0000305" key="2"/>
<accession>Q33142</accession>
<reference key="1">
    <citation type="journal article" date="1994" name="Syst. Bot.">
        <title>matK DNA sequences and phylogenetic reconstruction in Saxifragaceae sensu stricto.</title>
        <authorList>
            <person name="Johnson L.A."/>
            <person name="Soltis D.E."/>
        </authorList>
        <dbReference type="AGRICOLA" id="IND20396215"/>
    </citation>
    <scope>NUCLEOTIDE SEQUENCE [GENOMIC DNA]</scope>
    <source>
        <tissue>Leaf</tissue>
    </source>
</reference>
<name>MATK_MICPT</name>
<geneLocation type="chloroplast"/>
<feature type="chain" id="PRO_0000143702" description="Maturase K">
    <location>
        <begin position="1"/>
        <end position="353" status="greater than"/>
    </location>
</feature>
<feature type="non-terminal residue">
    <location>
        <position position="353"/>
    </location>
</feature>
<keyword id="KW-0150">Chloroplast</keyword>
<keyword id="KW-0507">mRNA processing</keyword>
<keyword id="KW-0934">Plastid</keyword>
<keyword id="KW-0694">RNA-binding</keyword>
<keyword id="KW-0819">tRNA processing</keyword>
<protein>
    <recommendedName>
        <fullName>Maturase K</fullName>
    </recommendedName>
    <alternativeName>
        <fullName>Intron maturase</fullName>
    </alternativeName>
</protein>
<dbReference type="EMBL" id="L34144">
    <property type="protein sequence ID" value="AAA84605.1"/>
    <property type="molecule type" value="Genomic_DNA"/>
</dbReference>
<dbReference type="GO" id="GO:0009507">
    <property type="term" value="C:chloroplast"/>
    <property type="evidence" value="ECO:0007669"/>
    <property type="project" value="UniProtKB-SubCell"/>
</dbReference>
<dbReference type="GO" id="GO:0003723">
    <property type="term" value="F:RNA binding"/>
    <property type="evidence" value="ECO:0007669"/>
    <property type="project" value="UniProtKB-KW"/>
</dbReference>
<dbReference type="GO" id="GO:0006397">
    <property type="term" value="P:mRNA processing"/>
    <property type="evidence" value="ECO:0007669"/>
    <property type="project" value="UniProtKB-KW"/>
</dbReference>
<dbReference type="GO" id="GO:0008033">
    <property type="term" value="P:tRNA processing"/>
    <property type="evidence" value="ECO:0007669"/>
    <property type="project" value="UniProtKB-KW"/>
</dbReference>
<dbReference type="InterPro" id="IPR002866">
    <property type="entry name" value="Maturase_MatK"/>
</dbReference>
<dbReference type="InterPro" id="IPR024942">
    <property type="entry name" value="Maturase_MatK_N"/>
</dbReference>
<dbReference type="PANTHER" id="PTHR34811">
    <property type="entry name" value="MATURASE K"/>
    <property type="match status" value="1"/>
</dbReference>
<dbReference type="PANTHER" id="PTHR34811:SF1">
    <property type="entry name" value="MATURASE K"/>
    <property type="match status" value="1"/>
</dbReference>
<dbReference type="Pfam" id="PF01824">
    <property type="entry name" value="MatK_N"/>
    <property type="match status" value="1"/>
</dbReference>
<sequence length="353" mass="41939">MEESQGYLELNKFLQNDFLYPLLFQEYIYAVAHDHILNRCILSDNLSYDNKSSSLIVKRLITRMSQPNHLIISDNDSNQNQFLXHNKNFDYQNQMISEGFAVVVEIQFSLRLVFSLERKEIVKSHNLRSIHSIFPFLEDNFLHLNYVSDILIXHSLHLEILVQTLRYWVKDASSLHLLRFFLYEYQNRNSLITPTPKKSISIVSKRNQRLFLILYNSYVCEYESIFIFICNQSSHLRSISSGTLFERIYFYGKIKHLVEVFYTDFPTVLWLFKVPFMHYVRYQGKSILASKGAPLLLNKWKYYLVNFWQCNFYLWSQSGRIHINQLSKNSLNFLGYLSSVRLNPSAVRSQMLE</sequence>
<organism>
    <name type="scientific">Micranthes punctata</name>
    <name type="common">Dotted saxifrage</name>
    <name type="synonym">Saxifraga punctata</name>
    <dbReference type="NCBI Taxonomy" id="29772"/>
    <lineage>
        <taxon>Eukaryota</taxon>
        <taxon>Viridiplantae</taxon>
        <taxon>Streptophyta</taxon>
        <taxon>Embryophyta</taxon>
        <taxon>Tracheophyta</taxon>
        <taxon>Spermatophyta</taxon>
        <taxon>Magnoliopsida</taxon>
        <taxon>eudicotyledons</taxon>
        <taxon>Gunneridae</taxon>
        <taxon>Pentapetalae</taxon>
        <taxon>Saxifragales</taxon>
        <taxon>Saxifragaceae</taxon>
        <taxon>Micrantheae</taxon>
        <taxon>Micranthes</taxon>
    </lineage>
</organism>
<comment type="function">
    <text evidence="1">Usually encoded in the trnK tRNA gene intron. Probably assists in splicing its own and other chloroplast group II introns (By similarity).</text>
</comment>
<comment type="subcellular location">
    <subcellularLocation>
        <location>Plastid</location>
        <location>Chloroplast</location>
    </subcellularLocation>
</comment>
<comment type="similarity">
    <text evidence="2">Belongs to the intron maturase 2 family. MatK subfamily.</text>
</comment>